<proteinExistence type="evidence at protein level"/>
<dbReference type="EMBL" id="X67505">
    <property type="protein sequence ID" value="CAA47839.1"/>
    <property type="molecule type" value="mRNA"/>
</dbReference>
<dbReference type="PIR" id="S28050">
    <property type="entry name" value="S28050"/>
</dbReference>
<dbReference type="RefSeq" id="NP_990649.1">
    <property type="nucleotide sequence ID" value="NM_205318.1"/>
</dbReference>
<dbReference type="PDB" id="1A5J">
    <property type="method" value="NMR"/>
    <property type="chains" value="A=79-186"/>
</dbReference>
<dbReference type="PDBsum" id="1A5J"/>
<dbReference type="BMRB" id="Q03237"/>
<dbReference type="SMR" id="Q03237"/>
<dbReference type="FunCoup" id="Q03237">
    <property type="interactions" value="799"/>
</dbReference>
<dbReference type="STRING" id="9031.ENSGALP00000046271"/>
<dbReference type="GlyGen" id="Q03237">
    <property type="glycosylation" value="1 site"/>
</dbReference>
<dbReference type="PaxDb" id="9031-ENSGALP00000005531"/>
<dbReference type="GeneID" id="396258"/>
<dbReference type="KEGG" id="gga:396258"/>
<dbReference type="CTD" id="4605"/>
<dbReference type="VEuPathDB" id="HostDB:geneid_396258"/>
<dbReference type="eggNOG" id="KOG0048">
    <property type="taxonomic scope" value="Eukaryota"/>
</dbReference>
<dbReference type="InParanoid" id="Q03237"/>
<dbReference type="OrthoDB" id="2143914at2759"/>
<dbReference type="PhylomeDB" id="Q03237"/>
<dbReference type="EvolutionaryTrace" id="Q03237"/>
<dbReference type="PRO" id="PR:Q03237"/>
<dbReference type="Proteomes" id="UP000000539">
    <property type="component" value="Unassembled WGS sequence"/>
</dbReference>
<dbReference type="GO" id="GO:0005634">
    <property type="term" value="C:nucleus"/>
    <property type="evidence" value="ECO:0000318"/>
    <property type="project" value="GO_Central"/>
</dbReference>
<dbReference type="GO" id="GO:0000981">
    <property type="term" value="F:DNA-binding transcription factor activity, RNA polymerase II-specific"/>
    <property type="evidence" value="ECO:0000318"/>
    <property type="project" value="GO_Central"/>
</dbReference>
<dbReference type="GO" id="GO:0000978">
    <property type="term" value="F:RNA polymerase II cis-regulatory region sequence-specific DNA binding"/>
    <property type="evidence" value="ECO:0000318"/>
    <property type="project" value="GO_Central"/>
</dbReference>
<dbReference type="GO" id="GO:0000278">
    <property type="term" value="P:mitotic cell cycle"/>
    <property type="evidence" value="ECO:0000318"/>
    <property type="project" value="GO_Central"/>
</dbReference>
<dbReference type="GO" id="GO:0045944">
    <property type="term" value="P:positive regulation of transcription by RNA polymerase II"/>
    <property type="evidence" value="ECO:0000318"/>
    <property type="project" value="GO_Central"/>
</dbReference>
<dbReference type="CDD" id="cd00167">
    <property type="entry name" value="SANT"/>
    <property type="match status" value="3"/>
</dbReference>
<dbReference type="FunFam" id="1.10.10.60:FF:000201">
    <property type="entry name" value="MYB proto-oncogene like 2"/>
    <property type="match status" value="1"/>
</dbReference>
<dbReference type="FunFam" id="1.10.10.60:FF:000216">
    <property type="entry name" value="MYB proto-oncogene like 2"/>
    <property type="match status" value="1"/>
</dbReference>
<dbReference type="FunFam" id="1.10.10.60:FF:000010">
    <property type="entry name" value="Transcriptional activator Myb isoform A"/>
    <property type="match status" value="1"/>
</dbReference>
<dbReference type="Gene3D" id="1.10.10.60">
    <property type="entry name" value="Homeodomain-like"/>
    <property type="match status" value="3"/>
</dbReference>
<dbReference type="InterPro" id="IPR015395">
    <property type="entry name" value="C-myb_C"/>
</dbReference>
<dbReference type="InterPro" id="IPR009057">
    <property type="entry name" value="Homeodomain-like_sf"/>
</dbReference>
<dbReference type="InterPro" id="IPR017930">
    <property type="entry name" value="Myb_dom"/>
</dbReference>
<dbReference type="InterPro" id="IPR050560">
    <property type="entry name" value="MYB_TF"/>
</dbReference>
<dbReference type="InterPro" id="IPR001005">
    <property type="entry name" value="SANT/Myb"/>
</dbReference>
<dbReference type="PANTHER" id="PTHR45614">
    <property type="entry name" value="MYB PROTEIN-RELATED"/>
    <property type="match status" value="1"/>
</dbReference>
<dbReference type="PANTHER" id="PTHR45614:SF51">
    <property type="entry name" value="MYB-LIKE DNA-BINDING PROTEIN BAS1"/>
    <property type="match status" value="1"/>
</dbReference>
<dbReference type="Pfam" id="PF09316">
    <property type="entry name" value="Cmyb_C"/>
    <property type="match status" value="1"/>
</dbReference>
<dbReference type="Pfam" id="PF13921">
    <property type="entry name" value="Myb_DNA-bind_6"/>
    <property type="match status" value="1"/>
</dbReference>
<dbReference type="Pfam" id="PF00249">
    <property type="entry name" value="Myb_DNA-binding"/>
    <property type="match status" value="1"/>
</dbReference>
<dbReference type="SMART" id="SM00717">
    <property type="entry name" value="SANT"/>
    <property type="match status" value="3"/>
</dbReference>
<dbReference type="SUPFAM" id="SSF46689">
    <property type="entry name" value="Homeodomain-like"/>
    <property type="match status" value="2"/>
</dbReference>
<dbReference type="PROSITE" id="PS51294">
    <property type="entry name" value="HTH_MYB"/>
    <property type="match status" value="3"/>
</dbReference>
<gene>
    <name type="primary">MYBL2</name>
    <name type="synonym">BMYB</name>
</gene>
<reference key="1">
    <citation type="journal article" date="1992" name="EMBO J.">
        <title>Functional antagonism between members of the myb family: B-myb inhibits v-myb-induced gene activation.</title>
        <authorList>
            <person name="Foos G."/>
            <person name="Grimm S."/>
            <person name="Klempnauer K.-H."/>
        </authorList>
    </citation>
    <scope>NUCLEOTIDE SEQUENCE [MRNA]</scope>
</reference>
<reference key="2">
    <citation type="journal article" date="1998" name="Biochemistry">
        <title>Solution structure of the B-Myb DNA-binding domain: a possible role for conformational instability of the protein in DNA binding and control of gene expression.</title>
        <authorList>
            <person name="McIntosh P.B."/>
            <person name="Frenkiel T.A."/>
            <person name="Wollborn U."/>
            <person name="McCormick J.E."/>
            <person name="Klempnauer K.H."/>
            <person name="Feeney J."/>
            <person name="Carr M.D."/>
        </authorList>
    </citation>
    <scope>STRUCTURE BY NMR OF 79-186</scope>
</reference>
<keyword id="KW-0002">3D-structure</keyword>
<keyword id="KW-0238">DNA-binding</keyword>
<keyword id="KW-0539">Nucleus</keyword>
<keyword id="KW-1185">Reference proteome</keyword>
<keyword id="KW-0677">Repeat</keyword>
<keyword id="KW-0804">Transcription</keyword>
<keyword id="KW-0805">Transcription regulation</keyword>
<protein>
    <recommendedName>
        <fullName>Myb-related protein B</fullName>
        <shortName>B-Myb</shortName>
    </recommendedName>
    <alternativeName>
        <fullName>Myb-like protein 2</fullName>
    </alternativeName>
</protein>
<sequence>MARRSRGEDQDELHCQDTDSDVPEQRDGRCKVKWTQEEDEQLKMLVRHYGQNDWKFLASHFPNRSDQQCQYRWLRVLNPDLVKGPWTKEEDQKVIELVKKYGTKQWTLIAKHLKGRLGKQCRERWHNHLNPEVKKSSWTEEEDRIIFEAHKVLGNRWAEIAKLLPGRTDNAVKNHWNSTIKRKVDTGGFLNETKESQPLYLLVEVDDNESQSGTRAESQTIVPNWPVDISEIKEEDVSDEEVTGLQELPSELPAADLAEHNEEGTPDDVVPEDASASVASPYKWVVEAANYLCPTSVPALNEALDMIESDPDGWCDLTQFDLPEEPSAGSSSSSNSPVRQTPSKPTPSLPNVTEYRLDGHTISDLSKSRKGELIPISPHAEVSFGTPPSVLKRQKKRKISLSPVTENAPSTSLSFLDSCNSMTPKSTPVKTLPFSPSQFLNFWTKQDTLELENPSLTSTPVCSQKVIVTTPLHRDKTPLLQKNSAFVTPDQKYVVDNTPHTPTPFKNALEKYGPIRPLPQTPHLEEDLKEVLRSEAGIELIIEDDVKPHKQKRKQGLRRSPIKKVRKSLALDIVDEDMTQNMPALPKTICFKRTQPVNFLSRSLNLSSSNRKNDSGLLNRAFVQVQSEKMSYRKMPSHFRPPAPMTRAWKAVACGGTQDQLFMQEKARQFLGTLKQSHTSRTLILS</sequence>
<name>MYBB_CHICK</name>
<evidence type="ECO:0000250" key="1"/>
<evidence type="ECO:0000255" key="2">
    <source>
        <dbReference type="PROSITE-ProRule" id="PRU00625"/>
    </source>
</evidence>
<evidence type="ECO:0000256" key="3">
    <source>
        <dbReference type="SAM" id="MobiDB-lite"/>
    </source>
</evidence>
<evidence type="ECO:0007829" key="4">
    <source>
        <dbReference type="PDB" id="1A5J"/>
    </source>
</evidence>
<comment type="function">
    <text>Represses v-myb- and c-myb-mediated activation of the mim-1 gene, probably by competing with other myb proteins for binding sites. It is an inhibitory member of the myb family.</text>
</comment>
<comment type="subunit">
    <text evidence="1">Component of the DREAM complex.</text>
</comment>
<comment type="subcellular location">
    <subcellularLocation>
        <location>Nucleus</location>
    </subcellularLocation>
</comment>
<comment type="tissue specificity">
    <text>Expressed in hematopoietic and non hematopoietic cells.</text>
</comment>
<accession>Q03237</accession>
<feature type="chain" id="PRO_0000197060" description="Myb-related protein B">
    <location>
        <begin position="1"/>
        <end position="686"/>
    </location>
</feature>
<feature type="domain" description="HTH myb-type 1" evidence="2">
    <location>
        <begin position="26"/>
        <end position="77"/>
    </location>
</feature>
<feature type="domain" description="HTH myb-type 2" evidence="2">
    <location>
        <begin position="78"/>
        <end position="133"/>
    </location>
</feature>
<feature type="domain" description="HTH myb-type 3" evidence="2">
    <location>
        <begin position="134"/>
        <end position="184"/>
    </location>
</feature>
<feature type="DNA-binding region" description="H-T-H motif" evidence="2">
    <location>
        <begin position="54"/>
        <end position="77"/>
    </location>
</feature>
<feature type="DNA-binding region" description="H-T-H motif" evidence="2">
    <location>
        <begin position="106"/>
        <end position="129"/>
    </location>
</feature>
<feature type="DNA-binding region" description="H-T-H motif" evidence="2">
    <location>
        <begin position="157"/>
        <end position="180"/>
    </location>
</feature>
<feature type="region of interest" description="Disordered" evidence="3">
    <location>
        <begin position="1"/>
        <end position="28"/>
    </location>
</feature>
<feature type="region of interest" description="Disordered" evidence="3">
    <location>
        <begin position="315"/>
        <end position="355"/>
    </location>
</feature>
<feature type="region of interest" description="Disordered" evidence="3">
    <location>
        <begin position="493"/>
        <end position="512"/>
    </location>
</feature>
<feature type="compositionally biased region" description="Low complexity" evidence="3">
    <location>
        <begin position="326"/>
        <end position="343"/>
    </location>
</feature>
<feature type="helix" evidence="4">
    <location>
        <begin position="88"/>
        <end position="101"/>
    </location>
</feature>
<feature type="helix" evidence="4">
    <location>
        <begin position="106"/>
        <end position="112"/>
    </location>
</feature>
<feature type="helix" evidence="4">
    <location>
        <begin position="122"/>
        <end position="125"/>
    </location>
</feature>
<feature type="strand" evidence="4">
    <location>
        <begin position="133"/>
        <end position="137"/>
    </location>
</feature>
<feature type="helix" evidence="4">
    <location>
        <begin position="140"/>
        <end position="147"/>
    </location>
</feature>
<feature type="turn" evidence="4">
    <location>
        <begin position="148"/>
        <end position="152"/>
    </location>
</feature>
<feature type="helix" evidence="4">
    <location>
        <begin position="157"/>
        <end position="163"/>
    </location>
</feature>
<feature type="helix" evidence="4">
    <location>
        <begin position="169"/>
        <end position="178"/>
    </location>
</feature>
<organism>
    <name type="scientific">Gallus gallus</name>
    <name type="common">Chicken</name>
    <dbReference type="NCBI Taxonomy" id="9031"/>
    <lineage>
        <taxon>Eukaryota</taxon>
        <taxon>Metazoa</taxon>
        <taxon>Chordata</taxon>
        <taxon>Craniata</taxon>
        <taxon>Vertebrata</taxon>
        <taxon>Euteleostomi</taxon>
        <taxon>Archelosauria</taxon>
        <taxon>Archosauria</taxon>
        <taxon>Dinosauria</taxon>
        <taxon>Saurischia</taxon>
        <taxon>Theropoda</taxon>
        <taxon>Coelurosauria</taxon>
        <taxon>Aves</taxon>
        <taxon>Neognathae</taxon>
        <taxon>Galloanserae</taxon>
        <taxon>Galliformes</taxon>
        <taxon>Phasianidae</taxon>
        <taxon>Phasianinae</taxon>
        <taxon>Gallus</taxon>
    </lineage>
</organism>